<accession>Q5HQW4</accession>
<protein>
    <recommendedName>
        <fullName>Thioredoxin reductase</fullName>
        <shortName>TRXR</shortName>
        <ecNumber>1.8.1.9</ecNumber>
    </recommendedName>
</protein>
<comment type="catalytic activity">
    <reaction>
        <text>[thioredoxin]-dithiol + NADP(+) = [thioredoxin]-disulfide + NADPH + H(+)</text>
        <dbReference type="Rhea" id="RHEA:20345"/>
        <dbReference type="Rhea" id="RHEA-COMP:10698"/>
        <dbReference type="Rhea" id="RHEA-COMP:10700"/>
        <dbReference type="ChEBI" id="CHEBI:15378"/>
        <dbReference type="ChEBI" id="CHEBI:29950"/>
        <dbReference type="ChEBI" id="CHEBI:50058"/>
        <dbReference type="ChEBI" id="CHEBI:57783"/>
        <dbReference type="ChEBI" id="CHEBI:58349"/>
        <dbReference type="EC" id="1.8.1.9"/>
    </reaction>
</comment>
<comment type="cofactor">
    <cofactor evidence="2">
        <name>FAD</name>
        <dbReference type="ChEBI" id="CHEBI:57692"/>
    </cofactor>
    <text evidence="2">Binds 1 FAD per subunit.</text>
</comment>
<comment type="subunit">
    <text evidence="2">Homodimer.</text>
</comment>
<comment type="subcellular location">
    <subcellularLocation>
        <location evidence="1">Cytoplasm</location>
    </subcellularLocation>
</comment>
<comment type="miscellaneous">
    <text>The active site is a redox-active disulfide bond.</text>
</comment>
<comment type="similarity">
    <text evidence="3">Belongs to the class-II pyridine nucleotide-disulfide oxidoreductase family.</text>
</comment>
<gene>
    <name type="primary">trxB</name>
    <name type="ordered locus">SERP0432</name>
</gene>
<organism>
    <name type="scientific">Staphylococcus epidermidis (strain ATCC 35984 / DSM 28319 / BCRC 17069 / CCUG 31568 / BM 3577 / RP62A)</name>
    <dbReference type="NCBI Taxonomy" id="176279"/>
    <lineage>
        <taxon>Bacteria</taxon>
        <taxon>Bacillati</taxon>
        <taxon>Bacillota</taxon>
        <taxon>Bacilli</taxon>
        <taxon>Bacillales</taxon>
        <taxon>Staphylococcaceae</taxon>
        <taxon>Staphylococcus</taxon>
    </lineage>
</organism>
<evidence type="ECO:0000250" key="1"/>
<evidence type="ECO:0000250" key="2">
    <source>
        <dbReference type="UniProtKB" id="P0A9P4"/>
    </source>
</evidence>
<evidence type="ECO:0000305" key="3"/>
<name>TRXB_STAEQ</name>
<proteinExistence type="inferred from homology"/>
<sequence length="310" mass="33544">MTEVDFDVAIIGAGPAGMTAAVYASRANLKTVMIERGMPGGQMANTEEVENFPGFEMITGPDLSTKMFEHAKKFGAEYQYGDIKSVEDKGDYKVINLGNKEITAHAVIISTGAEYKKIGVPGEQELGGRGVSYCAVCDGAFFKNKRLFVIGGGDSAVEEGTFLTKFADKVTIVHRRDELRAQNILQERAFKNDKVDFIWSHTLKTINEKDGKVGSVTLESTKDGAEQTYDADGVFIYIGMKPLTAPFKNLGITNDAGYIVTQDDMSTKVRGIFAAGDVRDKGLRQIVTATGDGSIAAQSAADYITELKDN</sequence>
<keyword id="KW-0963">Cytoplasm</keyword>
<keyword id="KW-1015">Disulfide bond</keyword>
<keyword id="KW-0274">FAD</keyword>
<keyword id="KW-0285">Flavoprotein</keyword>
<keyword id="KW-0521">NADP</keyword>
<keyword id="KW-0560">Oxidoreductase</keyword>
<keyword id="KW-0676">Redox-active center</keyword>
<keyword id="KW-1185">Reference proteome</keyword>
<dbReference type="EC" id="1.8.1.9"/>
<dbReference type="EMBL" id="CP000029">
    <property type="protein sequence ID" value="AAW53854.1"/>
    <property type="molecule type" value="Genomic_DNA"/>
</dbReference>
<dbReference type="RefSeq" id="WP_002438914.1">
    <property type="nucleotide sequence ID" value="NC_002976.3"/>
</dbReference>
<dbReference type="SMR" id="Q5HQW4"/>
<dbReference type="STRING" id="176279.SERP0432"/>
<dbReference type="GeneID" id="50019306"/>
<dbReference type="KEGG" id="ser:SERP0432"/>
<dbReference type="eggNOG" id="COG0492">
    <property type="taxonomic scope" value="Bacteria"/>
</dbReference>
<dbReference type="HOGENOM" id="CLU_031864_5_1_9"/>
<dbReference type="Proteomes" id="UP000000531">
    <property type="component" value="Chromosome"/>
</dbReference>
<dbReference type="GO" id="GO:0005737">
    <property type="term" value="C:cytoplasm"/>
    <property type="evidence" value="ECO:0007669"/>
    <property type="project" value="UniProtKB-SubCell"/>
</dbReference>
<dbReference type="GO" id="GO:0004791">
    <property type="term" value="F:thioredoxin-disulfide reductase (NADPH) activity"/>
    <property type="evidence" value="ECO:0007669"/>
    <property type="project" value="UniProtKB-EC"/>
</dbReference>
<dbReference type="GO" id="GO:0019430">
    <property type="term" value="P:removal of superoxide radicals"/>
    <property type="evidence" value="ECO:0007669"/>
    <property type="project" value="InterPro"/>
</dbReference>
<dbReference type="Gene3D" id="3.50.50.60">
    <property type="entry name" value="FAD/NAD(P)-binding domain"/>
    <property type="match status" value="2"/>
</dbReference>
<dbReference type="InterPro" id="IPR036188">
    <property type="entry name" value="FAD/NAD-bd_sf"/>
</dbReference>
<dbReference type="InterPro" id="IPR023753">
    <property type="entry name" value="FAD/NAD-binding_dom"/>
</dbReference>
<dbReference type="InterPro" id="IPR050097">
    <property type="entry name" value="Ferredoxin-NADP_redctase_2"/>
</dbReference>
<dbReference type="InterPro" id="IPR008255">
    <property type="entry name" value="Pyr_nucl-diS_OxRdtase_2_AS"/>
</dbReference>
<dbReference type="InterPro" id="IPR005982">
    <property type="entry name" value="Thioredox_Rdtase"/>
</dbReference>
<dbReference type="NCBIfam" id="TIGR01292">
    <property type="entry name" value="TRX_reduct"/>
    <property type="match status" value="1"/>
</dbReference>
<dbReference type="PANTHER" id="PTHR48105">
    <property type="entry name" value="THIOREDOXIN REDUCTASE 1-RELATED-RELATED"/>
    <property type="match status" value="1"/>
</dbReference>
<dbReference type="Pfam" id="PF07992">
    <property type="entry name" value="Pyr_redox_2"/>
    <property type="match status" value="1"/>
</dbReference>
<dbReference type="PRINTS" id="PR00368">
    <property type="entry name" value="FADPNR"/>
</dbReference>
<dbReference type="PRINTS" id="PR00469">
    <property type="entry name" value="PNDRDTASEII"/>
</dbReference>
<dbReference type="SUPFAM" id="SSF51905">
    <property type="entry name" value="FAD/NAD(P)-binding domain"/>
    <property type="match status" value="1"/>
</dbReference>
<dbReference type="PROSITE" id="PS00573">
    <property type="entry name" value="PYRIDINE_REDOX_2"/>
    <property type="match status" value="1"/>
</dbReference>
<feature type="chain" id="PRO_0000166751" description="Thioredoxin reductase">
    <location>
        <begin position="1"/>
        <end position="310"/>
    </location>
</feature>
<feature type="binding site" evidence="2">
    <location>
        <begin position="35"/>
        <end position="42"/>
    </location>
    <ligand>
        <name>FAD</name>
        <dbReference type="ChEBI" id="CHEBI:57692"/>
    </ligand>
</feature>
<feature type="binding site" evidence="2">
    <location>
        <begin position="277"/>
        <end position="286"/>
    </location>
    <ligand>
        <name>FAD</name>
        <dbReference type="ChEBI" id="CHEBI:57692"/>
    </ligand>
</feature>
<feature type="disulfide bond" description="Redox-active" evidence="2">
    <location>
        <begin position="134"/>
        <end position="137"/>
    </location>
</feature>
<reference key="1">
    <citation type="journal article" date="2005" name="J. Bacteriol.">
        <title>Insights on evolution of virulence and resistance from the complete genome analysis of an early methicillin-resistant Staphylococcus aureus strain and a biofilm-producing methicillin-resistant Staphylococcus epidermidis strain.</title>
        <authorList>
            <person name="Gill S.R."/>
            <person name="Fouts D.E."/>
            <person name="Archer G.L."/>
            <person name="Mongodin E.F."/>
            <person name="DeBoy R.T."/>
            <person name="Ravel J."/>
            <person name="Paulsen I.T."/>
            <person name="Kolonay J.F."/>
            <person name="Brinkac L.M."/>
            <person name="Beanan M.J."/>
            <person name="Dodson R.J."/>
            <person name="Daugherty S.C."/>
            <person name="Madupu R."/>
            <person name="Angiuoli S.V."/>
            <person name="Durkin A.S."/>
            <person name="Haft D.H."/>
            <person name="Vamathevan J.J."/>
            <person name="Khouri H."/>
            <person name="Utterback T.R."/>
            <person name="Lee C."/>
            <person name="Dimitrov G."/>
            <person name="Jiang L."/>
            <person name="Qin H."/>
            <person name="Weidman J."/>
            <person name="Tran K."/>
            <person name="Kang K.H."/>
            <person name="Hance I.R."/>
            <person name="Nelson K.E."/>
            <person name="Fraser C.M."/>
        </authorList>
    </citation>
    <scope>NUCLEOTIDE SEQUENCE [LARGE SCALE GENOMIC DNA]</scope>
    <source>
        <strain>ATCC 35984 / DSM 28319 / BCRC 17069 / CCUG 31568 / BM 3577 / RP62A</strain>
    </source>
</reference>